<proteinExistence type="inferred from homology"/>
<reference key="1">
    <citation type="journal article" date="2005" name="J. Bacteriol.">
        <title>Whole-genome sequence analysis of Pseudomonas syringae pv. phaseolicola 1448A reveals divergence among pathovars in genes involved in virulence and transposition.</title>
        <authorList>
            <person name="Joardar V."/>
            <person name="Lindeberg M."/>
            <person name="Jackson R.W."/>
            <person name="Selengut J."/>
            <person name="Dodson R."/>
            <person name="Brinkac L.M."/>
            <person name="Daugherty S.C."/>
            <person name="DeBoy R.T."/>
            <person name="Durkin A.S."/>
            <person name="Gwinn Giglio M."/>
            <person name="Madupu R."/>
            <person name="Nelson W.C."/>
            <person name="Rosovitz M.J."/>
            <person name="Sullivan S.A."/>
            <person name="Crabtree J."/>
            <person name="Creasy T."/>
            <person name="Davidsen T.M."/>
            <person name="Haft D.H."/>
            <person name="Zafar N."/>
            <person name="Zhou L."/>
            <person name="Halpin R."/>
            <person name="Holley T."/>
            <person name="Khouri H.M."/>
            <person name="Feldblyum T.V."/>
            <person name="White O."/>
            <person name="Fraser C.M."/>
            <person name="Chatterjee A.K."/>
            <person name="Cartinhour S."/>
            <person name="Schneider D."/>
            <person name="Mansfield J.W."/>
            <person name="Collmer A."/>
            <person name="Buell R."/>
        </authorList>
    </citation>
    <scope>NUCLEOTIDE SEQUENCE [LARGE SCALE GENOMIC DNA]</scope>
    <source>
        <strain>1448A / Race 6</strain>
    </source>
</reference>
<organism>
    <name type="scientific">Pseudomonas savastanoi pv. phaseolicola (strain 1448A / Race 6)</name>
    <name type="common">Pseudomonas syringae pv. phaseolicola (strain 1448A / Race 6)</name>
    <dbReference type="NCBI Taxonomy" id="264730"/>
    <lineage>
        <taxon>Bacteria</taxon>
        <taxon>Pseudomonadati</taxon>
        <taxon>Pseudomonadota</taxon>
        <taxon>Gammaproteobacteria</taxon>
        <taxon>Pseudomonadales</taxon>
        <taxon>Pseudomonadaceae</taxon>
        <taxon>Pseudomonas</taxon>
    </lineage>
</organism>
<evidence type="ECO:0000255" key="1">
    <source>
        <dbReference type="HAMAP-Rule" id="MF_00150"/>
    </source>
</evidence>
<comment type="function">
    <text evidence="1">Catalyzes the NADPH-dependent reduction of N-acetyl-5-glutamyl phosphate to yield N-acetyl-L-glutamate 5-semialdehyde.</text>
</comment>
<comment type="catalytic activity">
    <reaction evidence="1">
        <text>N-acetyl-L-glutamate 5-semialdehyde + phosphate + NADP(+) = N-acetyl-L-glutamyl 5-phosphate + NADPH + H(+)</text>
        <dbReference type="Rhea" id="RHEA:21588"/>
        <dbReference type="ChEBI" id="CHEBI:15378"/>
        <dbReference type="ChEBI" id="CHEBI:29123"/>
        <dbReference type="ChEBI" id="CHEBI:43474"/>
        <dbReference type="ChEBI" id="CHEBI:57783"/>
        <dbReference type="ChEBI" id="CHEBI:57936"/>
        <dbReference type="ChEBI" id="CHEBI:58349"/>
        <dbReference type="EC" id="1.2.1.38"/>
    </reaction>
</comment>
<comment type="pathway">
    <text evidence="1">Amino-acid biosynthesis; L-arginine biosynthesis; N(2)-acetyl-L-ornithine from L-glutamate: step 3/4.</text>
</comment>
<comment type="subcellular location">
    <subcellularLocation>
        <location evidence="1">Cytoplasm</location>
    </subcellularLocation>
</comment>
<comment type="similarity">
    <text evidence="1">Belongs to the NAGSA dehydrogenase family. Type 1 subfamily.</text>
</comment>
<keyword id="KW-0028">Amino-acid biosynthesis</keyword>
<keyword id="KW-0055">Arginine biosynthesis</keyword>
<keyword id="KW-0963">Cytoplasm</keyword>
<keyword id="KW-0521">NADP</keyword>
<keyword id="KW-0560">Oxidoreductase</keyword>
<name>ARGC_PSE14</name>
<feature type="chain" id="PRO_1000011037" description="N-acetyl-gamma-glutamyl-phosphate reductase">
    <location>
        <begin position="1"/>
        <end position="344"/>
    </location>
</feature>
<feature type="active site" evidence="1">
    <location>
        <position position="150"/>
    </location>
</feature>
<protein>
    <recommendedName>
        <fullName evidence="1">N-acetyl-gamma-glutamyl-phosphate reductase</fullName>
        <shortName evidence="1">AGPR</shortName>
        <ecNumber evidence="1">1.2.1.38</ecNumber>
    </recommendedName>
    <alternativeName>
        <fullName evidence="1">N-acetyl-glutamate semialdehyde dehydrogenase</fullName>
        <shortName evidence="1">NAGSA dehydrogenase</shortName>
    </alternativeName>
</protein>
<sequence>MVKVGIVGGTGYTGVELLRLLAQHPQAEVVVITSRSEAGMPVAEMYPNLRGHYDGLAFSVPDVKTLGACDVVFFATPHGVAHALAGELLAAGTKVIDLSADFRLQDPVEWAKWYGQPHGAPQLLQDAVYGLPEVNREQIKNARLIAVPGCYPTATQLGFLPLLEAGIADNTRLIADCKSGVSGAGRGLSIGSLYSEANESFKAYAVKGHRHLPEITQGLRRAAGGDIGLTFVPHLVPMIRGIHSTLYATVADRSVDLQALFEKRYADEPFVDVMPAGSHPETRSVRGANVCRIAVHRPQGGDLVVVLSVIDNLVKGASGQAVQNMNILFGLDERAGLSHAGMMP</sequence>
<gene>
    <name evidence="1" type="primary">argC</name>
    <name type="ordered locus">PSPPH_0684</name>
</gene>
<accession>Q48NN7</accession>
<dbReference type="EC" id="1.2.1.38" evidence="1"/>
<dbReference type="EMBL" id="CP000058">
    <property type="protein sequence ID" value="AAZ34293.1"/>
    <property type="molecule type" value="Genomic_DNA"/>
</dbReference>
<dbReference type="RefSeq" id="WP_004663836.1">
    <property type="nucleotide sequence ID" value="NC_005773.3"/>
</dbReference>
<dbReference type="SMR" id="Q48NN7"/>
<dbReference type="GeneID" id="61872151"/>
<dbReference type="KEGG" id="psp:PSPPH_0684"/>
<dbReference type="eggNOG" id="COG0002">
    <property type="taxonomic scope" value="Bacteria"/>
</dbReference>
<dbReference type="HOGENOM" id="CLU_006384_0_1_6"/>
<dbReference type="UniPathway" id="UPA00068">
    <property type="reaction ID" value="UER00108"/>
</dbReference>
<dbReference type="Proteomes" id="UP000000551">
    <property type="component" value="Chromosome"/>
</dbReference>
<dbReference type="GO" id="GO:0005737">
    <property type="term" value="C:cytoplasm"/>
    <property type="evidence" value="ECO:0007669"/>
    <property type="project" value="UniProtKB-SubCell"/>
</dbReference>
<dbReference type="GO" id="GO:0003942">
    <property type="term" value="F:N-acetyl-gamma-glutamyl-phosphate reductase activity"/>
    <property type="evidence" value="ECO:0007669"/>
    <property type="project" value="UniProtKB-UniRule"/>
</dbReference>
<dbReference type="GO" id="GO:0051287">
    <property type="term" value="F:NAD binding"/>
    <property type="evidence" value="ECO:0007669"/>
    <property type="project" value="InterPro"/>
</dbReference>
<dbReference type="GO" id="GO:0070401">
    <property type="term" value="F:NADP+ binding"/>
    <property type="evidence" value="ECO:0007669"/>
    <property type="project" value="InterPro"/>
</dbReference>
<dbReference type="GO" id="GO:0006526">
    <property type="term" value="P:L-arginine biosynthetic process"/>
    <property type="evidence" value="ECO:0007669"/>
    <property type="project" value="UniProtKB-UniRule"/>
</dbReference>
<dbReference type="CDD" id="cd23934">
    <property type="entry name" value="AGPR_1_C"/>
    <property type="match status" value="1"/>
</dbReference>
<dbReference type="CDD" id="cd17895">
    <property type="entry name" value="AGPR_1_N"/>
    <property type="match status" value="1"/>
</dbReference>
<dbReference type="FunFam" id="3.30.360.10:FF:000014">
    <property type="entry name" value="N-acetyl-gamma-glutamyl-phosphate reductase"/>
    <property type="match status" value="1"/>
</dbReference>
<dbReference type="Gene3D" id="3.30.360.10">
    <property type="entry name" value="Dihydrodipicolinate Reductase, domain 2"/>
    <property type="match status" value="1"/>
</dbReference>
<dbReference type="Gene3D" id="3.40.50.720">
    <property type="entry name" value="NAD(P)-binding Rossmann-like Domain"/>
    <property type="match status" value="1"/>
</dbReference>
<dbReference type="HAMAP" id="MF_00150">
    <property type="entry name" value="ArgC_type1"/>
    <property type="match status" value="1"/>
</dbReference>
<dbReference type="InterPro" id="IPR023013">
    <property type="entry name" value="AGPR_AS"/>
</dbReference>
<dbReference type="InterPro" id="IPR000706">
    <property type="entry name" value="AGPR_type-1"/>
</dbReference>
<dbReference type="InterPro" id="IPR036291">
    <property type="entry name" value="NAD(P)-bd_dom_sf"/>
</dbReference>
<dbReference type="InterPro" id="IPR050085">
    <property type="entry name" value="NAGSA_dehydrogenase"/>
</dbReference>
<dbReference type="InterPro" id="IPR000534">
    <property type="entry name" value="Semialdehyde_DH_NAD-bd"/>
</dbReference>
<dbReference type="NCBIfam" id="TIGR01850">
    <property type="entry name" value="argC"/>
    <property type="match status" value="1"/>
</dbReference>
<dbReference type="PANTHER" id="PTHR32338:SF10">
    <property type="entry name" value="N-ACETYL-GAMMA-GLUTAMYL-PHOSPHATE REDUCTASE, CHLOROPLASTIC-RELATED"/>
    <property type="match status" value="1"/>
</dbReference>
<dbReference type="PANTHER" id="PTHR32338">
    <property type="entry name" value="N-ACETYL-GAMMA-GLUTAMYL-PHOSPHATE REDUCTASE, CHLOROPLASTIC-RELATED-RELATED"/>
    <property type="match status" value="1"/>
</dbReference>
<dbReference type="Pfam" id="PF01118">
    <property type="entry name" value="Semialdhyde_dh"/>
    <property type="match status" value="1"/>
</dbReference>
<dbReference type="Pfam" id="PF22698">
    <property type="entry name" value="Semialdhyde_dhC_1"/>
    <property type="match status" value="1"/>
</dbReference>
<dbReference type="SMART" id="SM00859">
    <property type="entry name" value="Semialdhyde_dh"/>
    <property type="match status" value="1"/>
</dbReference>
<dbReference type="SUPFAM" id="SSF55347">
    <property type="entry name" value="Glyceraldehyde-3-phosphate dehydrogenase-like, C-terminal domain"/>
    <property type="match status" value="1"/>
</dbReference>
<dbReference type="SUPFAM" id="SSF51735">
    <property type="entry name" value="NAD(P)-binding Rossmann-fold domains"/>
    <property type="match status" value="1"/>
</dbReference>
<dbReference type="PROSITE" id="PS01224">
    <property type="entry name" value="ARGC"/>
    <property type="match status" value="1"/>
</dbReference>